<reference key="1">
    <citation type="journal article" date="1991" name="DNA Seq.">
        <title>A gene encoding a tyrosine tRNA synthetase is located near sacS in Bacillus subtilis.</title>
        <authorList>
            <person name="Glaser P."/>
            <person name="Kunst F."/>
            <person name="Debarbouille M."/>
            <person name="Vertes A."/>
            <person name="Danchin A."/>
            <person name="Dedonder R."/>
        </authorList>
    </citation>
    <scope>NUCLEOTIDE SEQUENCE [GENOMIC DNA]</scope>
    <source>
        <strain>168</strain>
    </source>
</reference>
<reference key="2">
    <citation type="journal article" date="1993" name="Mol. Microbiol.">
        <title>Bacillus subtilis genome project: cloning and sequencing of the 97 kb region from 325 degrees to 333 degrees.</title>
        <authorList>
            <person name="Glaser P."/>
            <person name="Kunst F."/>
            <person name="Arnaud M."/>
            <person name="Coudart M.P."/>
            <person name="Gonzales W."/>
            <person name="Hullo M.-F."/>
            <person name="Ionescu M."/>
            <person name="Lubochinsky B."/>
            <person name="Marcelino L."/>
            <person name="Moszer I."/>
            <person name="Presecan E."/>
            <person name="Santana M."/>
            <person name="Schneider E."/>
            <person name="Schweizer J."/>
            <person name="Vertes A."/>
            <person name="Rapoport G."/>
            <person name="Danchin A."/>
        </authorList>
    </citation>
    <scope>NUCLEOTIDE SEQUENCE [GENOMIC DNA]</scope>
    <source>
        <strain>168</strain>
    </source>
</reference>
<reference key="3">
    <citation type="journal article" date="1997" name="Nature">
        <title>The complete genome sequence of the Gram-positive bacterium Bacillus subtilis.</title>
        <authorList>
            <person name="Kunst F."/>
            <person name="Ogasawara N."/>
            <person name="Moszer I."/>
            <person name="Albertini A.M."/>
            <person name="Alloni G."/>
            <person name="Azevedo V."/>
            <person name="Bertero M.G."/>
            <person name="Bessieres P."/>
            <person name="Bolotin A."/>
            <person name="Borchert S."/>
            <person name="Borriss R."/>
            <person name="Boursier L."/>
            <person name="Brans A."/>
            <person name="Braun M."/>
            <person name="Brignell S.C."/>
            <person name="Bron S."/>
            <person name="Brouillet S."/>
            <person name="Bruschi C.V."/>
            <person name="Caldwell B."/>
            <person name="Capuano V."/>
            <person name="Carter N.M."/>
            <person name="Choi S.-K."/>
            <person name="Codani J.-J."/>
            <person name="Connerton I.F."/>
            <person name="Cummings N.J."/>
            <person name="Daniel R.A."/>
            <person name="Denizot F."/>
            <person name="Devine K.M."/>
            <person name="Duesterhoeft A."/>
            <person name="Ehrlich S.D."/>
            <person name="Emmerson P.T."/>
            <person name="Entian K.-D."/>
            <person name="Errington J."/>
            <person name="Fabret C."/>
            <person name="Ferrari E."/>
            <person name="Foulger D."/>
            <person name="Fritz C."/>
            <person name="Fujita M."/>
            <person name="Fujita Y."/>
            <person name="Fuma S."/>
            <person name="Galizzi A."/>
            <person name="Galleron N."/>
            <person name="Ghim S.-Y."/>
            <person name="Glaser P."/>
            <person name="Goffeau A."/>
            <person name="Golightly E.J."/>
            <person name="Grandi G."/>
            <person name="Guiseppi G."/>
            <person name="Guy B.J."/>
            <person name="Haga K."/>
            <person name="Haiech J."/>
            <person name="Harwood C.R."/>
            <person name="Henaut A."/>
            <person name="Hilbert H."/>
            <person name="Holsappel S."/>
            <person name="Hosono S."/>
            <person name="Hullo M.-F."/>
            <person name="Itaya M."/>
            <person name="Jones L.-M."/>
            <person name="Joris B."/>
            <person name="Karamata D."/>
            <person name="Kasahara Y."/>
            <person name="Klaerr-Blanchard M."/>
            <person name="Klein C."/>
            <person name="Kobayashi Y."/>
            <person name="Koetter P."/>
            <person name="Koningstein G."/>
            <person name="Krogh S."/>
            <person name="Kumano M."/>
            <person name="Kurita K."/>
            <person name="Lapidus A."/>
            <person name="Lardinois S."/>
            <person name="Lauber J."/>
            <person name="Lazarevic V."/>
            <person name="Lee S.-M."/>
            <person name="Levine A."/>
            <person name="Liu H."/>
            <person name="Masuda S."/>
            <person name="Mauel C."/>
            <person name="Medigue C."/>
            <person name="Medina N."/>
            <person name="Mellado R.P."/>
            <person name="Mizuno M."/>
            <person name="Moestl D."/>
            <person name="Nakai S."/>
            <person name="Noback M."/>
            <person name="Noone D."/>
            <person name="O'Reilly M."/>
            <person name="Ogawa K."/>
            <person name="Ogiwara A."/>
            <person name="Oudega B."/>
            <person name="Park S.-H."/>
            <person name="Parro V."/>
            <person name="Pohl T.M."/>
            <person name="Portetelle D."/>
            <person name="Porwollik S."/>
            <person name="Prescott A.M."/>
            <person name="Presecan E."/>
            <person name="Pujic P."/>
            <person name="Purnelle B."/>
            <person name="Rapoport G."/>
            <person name="Rey M."/>
            <person name="Reynolds S."/>
            <person name="Rieger M."/>
            <person name="Rivolta C."/>
            <person name="Rocha E."/>
            <person name="Roche B."/>
            <person name="Rose M."/>
            <person name="Sadaie Y."/>
            <person name="Sato T."/>
            <person name="Scanlan E."/>
            <person name="Schleich S."/>
            <person name="Schroeter R."/>
            <person name="Scoffone F."/>
            <person name="Sekiguchi J."/>
            <person name="Sekowska A."/>
            <person name="Seror S.J."/>
            <person name="Serror P."/>
            <person name="Shin B.-S."/>
            <person name="Soldo B."/>
            <person name="Sorokin A."/>
            <person name="Tacconi E."/>
            <person name="Takagi T."/>
            <person name="Takahashi H."/>
            <person name="Takemaru K."/>
            <person name="Takeuchi M."/>
            <person name="Tamakoshi A."/>
            <person name="Tanaka T."/>
            <person name="Terpstra P."/>
            <person name="Tognoni A."/>
            <person name="Tosato V."/>
            <person name="Uchiyama S."/>
            <person name="Vandenbol M."/>
            <person name="Vannier F."/>
            <person name="Vassarotti A."/>
            <person name="Viari A."/>
            <person name="Wambutt R."/>
            <person name="Wedler E."/>
            <person name="Wedler H."/>
            <person name="Weitzenegger T."/>
            <person name="Winters P."/>
            <person name="Wipat A."/>
            <person name="Yamamoto H."/>
            <person name="Yamane K."/>
            <person name="Yasumoto K."/>
            <person name="Yata K."/>
            <person name="Yoshida K."/>
            <person name="Yoshikawa H.-F."/>
            <person name="Zumstein E."/>
            <person name="Yoshikawa H."/>
            <person name="Danchin A."/>
        </authorList>
    </citation>
    <scope>NUCLEOTIDE SEQUENCE [LARGE SCALE GENOMIC DNA]</scope>
    <source>
        <strain>168</strain>
    </source>
</reference>
<sequence length="171" mass="19640">MERSHQHQQLRKEEHDTLSKLKQMPVESLNLEAISIATNLYRSAQRLRVKMETEVLSTYNLSWTAFSILYDLWVWGALETRKIAELSGISTATASNVIKTLEKKSFCRKSIDTRDRRLVFVSITDSGKQAIEELYPEFHKGETELIAGMTKDEQKILTGLLRKVADNLHTT</sequence>
<keyword id="KW-0238">DNA-binding</keyword>
<keyword id="KW-1185">Reference proteome</keyword>
<keyword id="KW-0804">Transcription</keyword>
<keyword id="KW-0805">Transcription regulation</keyword>
<name>YWAE_BACSU</name>
<feature type="chain" id="PRO_0000054404" description="Uncharacterized HTH-type transcriptional regulator YwaE">
    <location>
        <begin position="1"/>
        <end position="171"/>
    </location>
</feature>
<feature type="domain" description="HTH marR-type" evidence="1">
    <location>
        <begin position="33"/>
        <end position="166"/>
    </location>
</feature>
<feature type="DNA-binding region" description="H-T-H motif" evidence="1">
    <location>
        <begin position="80"/>
        <end position="103"/>
    </location>
</feature>
<dbReference type="EMBL" id="X52480">
    <property type="protein sequence ID" value="CAA36723.1"/>
    <property type="molecule type" value="Genomic_DNA"/>
</dbReference>
<dbReference type="EMBL" id="X73124">
    <property type="protein sequence ID" value="CAA51566.1"/>
    <property type="molecule type" value="Genomic_DNA"/>
</dbReference>
<dbReference type="EMBL" id="AL009126">
    <property type="protein sequence ID" value="CAB15871.1"/>
    <property type="molecule type" value="Genomic_DNA"/>
</dbReference>
<dbReference type="PIR" id="S16425">
    <property type="entry name" value="S16425"/>
</dbReference>
<dbReference type="RefSeq" id="WP_003243598.1">
    <property type="nucleotide sequence ID" value="NZ_OZ025638.1"/>
</dbReference>
<dbReference type="SMR" id="P25150"/>
<dbReference type="FunCoup" id="P25150">
    <property type="interactions" value="1"/>
</dbReference>
<dbReference type="STRING" id="224308.BSU38450"/>
<dbReference type="PaxDb" id="224308-BSU38450"/>
<dbReference type="EnsemblBacteria" id="CAB15871">
    <property type="protein sequence ID" value="CAB15871"/>
    <property type="gene ID" value="BSU_38450"/>
</dbReference>
<dbReference type="GeneID" id="937344"/>
<dbReference type="KEGG" id="bsu:BSU38450"/>
<dbReference type="PATRIC" id="fig|224308.179.peg.4162"/>
<dbReference type="eggNOG" id="COG1846">
    <property type="taxonomic scope" value="Bacteria"/>
</dbReference>
<dbReference type="InParanoid" id="P25150"/>
<dbReference type="OrthoDB" id="3237509at2"/>
<dbReference type="PhylomeDB" id="P25150"/>
<dbReference type="BioCyc" id="BSUB:BSU38450-MONOMER"/>
<dbReference type="Proteomes" id="UP000001570">
    <property type="component" value="Chromosome"/>
</dbReference>
<dbReference type="GO" id="GO:0003677">
    <property type="term" value="F:DNA binding"/>
    <property type="evidence" value="ECO:0007669"/>
    <property type="project" value="UniProtKB-KW"/>
</dbReference>
<dbReference type="GO" id="GO:0003700">
    <property type="term" value="F:DNA-binding transcription factor activity"/>
    <property type="evidence" value="ECO:0007669"/>
    <property type="project" value="InterPro"/>
</dbReference>
<dbReference type="GO" id="GO:0006355">
    <property type="term" value="P:regulation of DNA-templated transcription"/>
    <property type="evidence" value="ECO:0000318"/>
    <property type="project" value="GO_Central"/>
</dbReference>
<dbReference type="GO" id="GO:0006950">
    <property type="term" value="P:response to stress"/>
    <property type="evidence" value="ECO:0000318"/>
    <property type="project" value="GO_Central"/>
</dbReference>
<dbReference type="Gene3D" id="1.10.10.10">
    <property type="entry name" value="Winged helix-like DNA-binding domain superfamily/Winged helix DNA-binding domain"/>
    <property type="match status" value="1"/>
</dbReference>
<dbReference type="InterPro" id="IPR000835">
    <property type="entry name" value="HTH_MarR-typ"/>
</dbReference>
<dbReference type="InterPro" id="IPR039422">
    <property type="entry name" value="MarR/SlyA-like"/>
</dbReference>
<dbReference type="InterPro" id="IPR023187">
    <property type="entry name" value="Tscrpt_reg_MarR-type_CS"/>
</dbReference>
<dbReference type="InterPro" id="IPR036388">
    <property type="entry name" value="WH-like_DNA-bd_sf"/>
</dbReference>
<dbReference type="InterPro" id="IPR036390">
    <property type="entry name" value="WH_DNA-bd_sf"/>
</dbReference>
<dbReference type="PANTHER" id="PTHR33164:SF89">
    <property type="entry name" value="MARR FAMILY REGULATORY PROTEIN"/>
    <property type="match status" value="1"/>
</dbReference>
<dbReference type="PANTHER" id="PTHR33164">
    <property type="entry name" value="TRANSCRIPTIONAL REGULATOR, MARR FAMILY"/>
    <property type="match status" value="1"/>
</dbReference>
<dbReference type="Pfam" id="PF01047">
    <property type="entry name" value="MarR"/>
    <property type="match status" value="1"/>
</dbReference>
<dbReference type="PRINTS" id="PR00598">
    <property type="entry name" value="HTHMARR"/>
</dbReference>
<dbReference type="SMART" id="SM00347">
    <property type="entry name" value="HTH_MARR"/>
    <property type="match status" value="1"/>
</dbReference>
<dbReference type="SUPFAM" id="SSF46785">
    <property type="entry name" value="Winged helix' DNA-binding domain"/>
    <property type="match status" value="1"/>
</dbReference>
<dbReference type="PROSITE" id="PS01117">
    <property type="entry name" value="HTH_MARR_1"/>
    <property type="match status" value="1"/>
</dbReference>
<dbReference type="PROSITE" id="PS50995">
    <property type="entry name" value="HTH_MARR_2"/>
    <property type="match status" value="1"/>
</dbReference>
<accession>P25150</accession>
<proteinExistence type="predicted"/>
<gene>
    <name type="primary">ywaE</name>
    <name type="ordered locus">BSU38450</name>
    <name type="ORF">ipa-10r</name>
</gene>
<protein>
    <recommendedName>
        <fullName>Uncharacterized HTH-type transcriptional regulator YwaE</fullName>
    </recommendedName>
</protein>
<evidence type="ECO:0000255" key="1">
    <source>
        <dbReference type="PROSITE-ProRule" id="PRU00345"/>
    </source>
</evidence>
<organism>
    <name type="scientific">Bacillus subtilis (strain 168)</name>
    <dbReference type="NCBI Taxonomy" id="224308"/>
    <lineage>
        <taxon>Bacteria</taxon>
        <taxon>Bacillati</taxon>
        <taxon>Bacillota</taxon>
        <taxon>Bacilli</taxon>
        <taxon>Bacillales</taxon>
        <taxon>Bacillaceae</taxon>
        <taxon>Bacillus</taxon>
    </lineage>
</organism>